<accession>Q48DC9</accession>
<organism>
    <name type="scientific">Pseudomonas savastanoi pv. phaseolicola (strain 1448A / Race 6)</name>
    <name type="common">Pseudomonas syringae pv. phaseolicola (strain 1448A / Race 6)</name>
    <dbReference type="NCBI Taxonomy" id="264730"/>
    <lineage>
        <taxon>Bacteria</taxon>
        <taxon>Pseudomonadati</taxon>
        <taxon>Pseudomonadota</taxon>
        <taxon>Gammaproteobacteria</taxon>
        <taxon>Pseudomonadales</taxon>
        <taxon>Pseudomonadaceae</taxon>
        <taxon>Pseudomonas</taxon>
    </lineage>
</organism>
<gene>
    <name evidence="1" type="primary">ureE</name>
    <name type="ordered locus">PSPPH_4496</name>
</gene>
<proteinExistence type="inferred from homology"/>
<reference key="1">
    <citation type="journal article" date="2005" name="J. Bacteriol.">
        <title>Whole-genome sequence analysis of Pseudomonas syringae pv. phaseolicola 1448A reveals divergence among pathovars in genes involved in virulence and transposition.</title>
        <authorList>
            <person name="Joardar V."/>
            <person name="Lindeberg M."/>
            <person name="Jackson R.W."/>
            <person name="Selengut J."/>
            <person name="Dodson R."/>
            <person name="Brinkac L.M."/>
            <person name="Daugherty S.C."/>
            <person name="DeBoy R.T."/>
            <person name="Durkin A.S."/>
            <person name="Gwinn Giglio M."/>
            <person name="Madupu R."/>
            <person name="Nelson W.C."/>
            <person name="Rosovitz M.J."/>
            <person name="Sullivan S.A."/>
            <person name="Crabtree J."/>
            <person name="Creasy T."/>
            <person name="Davidsen T.M."/>
            <person name="Haft D.H."/>
            <person name="Zafar N."/>
            <person name="Zhou L."/>
            <person name="Halpin R."/>
            <person name="Holley T."/>
            <person name="Khouri H.M."/>
            <person name="Feldblyum T.V."/>
            <person name="White O."/>
            <person name="Fraser C.M."/>
            <person name="Chatterjee A.K."/>
            <person name="Cartinhour S."/>
            <person name="Schneider D."/>
            <person name="Mansfield J.W."/>
            <person name="Collmer A."/>
            <person name="Buell R."/>
        </authorList>
    </citation>
    <scope>NUCLEOTIDE SEQUENCE [LARGE SCALE GENOMIC DNA]</scope>
    <source>
        <strain>1448A / Race 6</strain>
    </source>
</reference>
<evidence type="ECO:0000255" key="1">
    <source>
        <dbReference type="HAMAP-Rule" id="MF_00822"/>
    </source>
</evidence>
<keyword id="KW-0143">Chaperone</keyword>
<keyword id="KW-0963">Cytoplasm</keyword>
<keyword id="KW-0533">Nickel</keyword>
<keyword id="KW-0996">Nickel insertion</keyword>
<name>UREE_PSE14</name>
<sequence length="166" mass="18861">MLVIHNRIEPQAEWAAELHLNFEARSKSRLRCFSAENEDVGLFLQRGQSPLRDGEFLKAEDGRVVRVCARPEKLMHVTCSSTFELTRAAYHLGNRHVALQVGDGWLRLLDDYVLKAMLDQLGATVETIEAPFQPEHGAYGGGHHHSRAGEEDFNYPPRMHQFGVRK</sequence>
<feature type="chain" id="PRO_0000223424" description="Urease accessory protein UreE">
    <location>
        <begin position="1"/>
        <end position="166"/>
    </location>
</feature>
<dbReference type="EMBL" id="CP000058">
    <property type="protein sequence ID" value="AAZ36895.1"/>
    <property type="molecule type" value="Genomic_DNA"/>
</dbReference>
<dbReference type="RefSeq" id="WP_004655826.1">
    <property type="nucleotide sequence ID" value="NC_005773.3"/>
</dbReference>
<dbReference type="SMR" id="Q48DC9"/>
<dbReference type="GeneID" id="69861508"/>
<dbReference type="KEGG" id="psp:PSPPH_4496"/>
<dbReference type="eggNOG" id="COG2371">
    <property type="taxonomic scope" value="Bacteria"/>
</dbReference>
<dbReference type="HOGENOM" id="CLU_093757_2_0_6"/>
<dbReference type="Proteomes" id="UP000000551">
    <property type="component" value="Chromosome"/>
</dbReference>
<dbReference type="GO" id="GO:0005737">
    <property type="term" value="C:cytoplasm"/>
    <property type="evidence" value="ECO:0007669"/>
    <property type="project" value="UniProtKB-SubCell"/>
</dbReference>
<dbReference type="GO" id="GO:0016151">
    <property type="term" value="F:nickel cation binding"/>
    <property type="evidence" value="ECO:0007669"/>
    <property type="project" value="UniProtKB-UniRule"/>
</dbReference>
<dbReference type="GO" id="GO:0051082">
    <property type="term" value="F:unfolded protein binding"/>
    <property type="evidence" value="ECO:0007669"/>
    <property type="project" value="UniProtKB-UniRule"/>
</dbReference>
<dbReference type="GO" id="GO:0006457">
    <property type="term" value="P:protein folding"/>
    <property type="evidence" value="ECO:0007669"/>
    <property type="project" value="InterPro"/>
</dbReference>
<dbReference type="GO" id="GO:0065003">
    <property type="term" value="P:protein-containing complex assembly"/>
    <property type="evidence" value="ECO:0007669"/>
    <property type="project" value="InterPro"/>
</dbReference>
<dbReference type="GO" id="GO:0019627">
    <property type="term" value="P:urea metabolic process"/>
    <property type="evidence" value="ECO:0007669"/>
    <property type="project" value="InterPro"/>
</dbReference>
<dbReference type="CDD" id="cd00571">
    <property type="entry name" value="UreE"/>
    <property type="match status" value="1"/>
</dbReference>
<dbReference type="Gene3D" id="2.60.260.20">
    <property type="entry name" value="Urease metallochaperone UreE, N-terminal domain"/>
    <property type="match status" value="1"/>
</dbReference>
<dbReference type="Gene3D" id="3.30.70.790">
    <property type="entry name" value="UreE, C-terminal domain"/>
    <property type="match status" value="1"/>
</dbReference>
<dbReference type="HAMAP" id="MF_00822">
    <property type="entry name" value="UreE"/>
    <property type="match status" value="1"/>
</dbReference>
<dbReference type="InterPro" id="IPR012406">
    <property type="entry name" value="UreE"/>
</dbReference>
<dbReference type="InterPro" id="IPR007864">
    <property type="entry name" value="UreE_C_dom"/>
</dbReference>
<dbReference type="InterPro" id="IPR004029">
    <property type="entry name" value="UreE_N"/>
</dbReference>
<dbReference type="InterPro" id="IPR036118">
    <property type="entry name" value="UreE_N_sf"/>
</dbReference>
<dbReference type="NCBIfam" id="NF009751">
    <property type="entry name" value="PRK13261.1-1"/>
    <property type="match status" value="1"/>
</dbReference>
<dbReference type="NCBIfam" id="NF009753">
    <property type="entry name" value="PRK13261.1-5"/>
    <property type="match status" value="1"/>
</dbReference>
<dbReference type="Pfam" id="PF05194">
    <property type="entry name" value="UreE_C"/>
    <property type="match status" value="1"/>
</dbReference>
<dbReference type="Pfam" id="PF02814">
    <property type="entry name" value="UreE_N"/>
    <property type="match status" value="1"/>
</dbReference>
<dbReference type="PIRSF" id="PIRSF036402">
    <property type="entry name" value="Ureas_acces_UreE"/>
    <property type="match status" value="1"/>
</dbReference>
<dbReference type="SMART" id="SM00988">
    <property type="entry name" value="UreE_N"/>
    <property type="match status" value="1"/>
</dbReference>
<dbReference type="SUPFAM" id="SSF69737">
    <property type="entry name" value="Urease metallochaperone UreE, C-terminal domain"/>
    <property type="match status" value="1"/>
</dbReference>
<dbReference type="SUPFAM" id="SSF69287">
    <property type="entry name" value="Urease metallochaperone UreE, N-terminal domain"/>
    <property type="match status" value="1"/>
</dbReference>
<comment type="function">
    <text evidence="1">Involved in urease metallocenter assembly. Binds nickel. Probably functions as a nickel donor during metallocenter assembly.</text>
</comment>
<comment type="subcellular location">
    <subcellularLocation>
        <location evidence="1">Cytoplasm</location>
    </subcellularLocation>
</comment>
<comment type="similarity">
    <text evidence="1">Belongs to the UreE family.</text>
</comment>
<protein>
    <recommendedName>
        <fullName evidence="1">Urease accessory protein UreE</fullName>
    </recommendedName>
</protein>